<name>ARNB_SALPB</name>
<sequence length="379" mass="41152">MSDFLPFSRPAMGAEELAAVKTVLDSGWITTGPKNQELEAAFCRLTGNQYAVAVSSATAGMHIALMALGIGEGDEVITPSMTWVSTLNMIVLLGATPVMVDVDRDTLMVTPEHIEAAITPQTKAIIPVHYAGAPADLDAIYALGERYGIPVIEDAAHATGTSYKGRHIGARGTAIFSFHAIKNITCAEGGIVVTDNPQFADKLRSLKFHGLGVDAWDRQSGGRAPQAEVLAPGYKYNLPDLNAAIALAQLQKLDALNARRAAIAAQYHQAMADLPFQPLSLPSWEHIHAWHLFIIRVDEARCGITRDALMASLKTKGIGTGLHFRAAHTQKYYRERFPTLTLPDTEWNSERICSLPLFPDMTESDFDRVITALHQIAGQ</sequence>
<reference key="1">
    <citation type="submission" date="2007-11" db="EMBL/GenBank/DDBJ databases">
        <authorList>
            <consortium name="The Salmonella enterica serovar Paratyphi B Genome Sequencing Project"/>
            <person name="McClelland M."/>
            <person name="Sanderson E.K."/>
            <person name="Porwollik S."/>
            <person name="Spieth J."/>
            <person name="Clifton W.S."/>
            <person name="Fulton R."/>
            <person name="Cordes M."/>
            <person name="Wollam A."/>
            <person name="Shah N."/>
            <person name="Pepin K."/>
            <person name="Bhonagiri V."/>
            <person name="Nash W."/>
            <person name="Johnson M."/>
            <person name="Thiruvilangam P."/>
            <person name="Wilson R."/>
        </authorList>
    </citation>
    <scope>NUCLEOTIDE SEQUENCE [LARGE SCALE GENOMIC DNA]</scope>
    <source>
        <strain>ATCC BAA-1250 / SPB7</strain>
    </source>
</reference>
<gene>
    <name evidence="1" type="primary">arnB</name>
    <name type="ordered locus">SPAB_00684</name>
</gene>
<organism>
    <name type="scientific">Salmonella paratyphi B (strain ATCC BAA-1250 / SPB7)</name>
    <dbReference type="NCBI Taxonomy" id="1016998"/>
    <lineage>
        <taxon>Bacteria</taxon>
        <taxon>Pseudomonadati</taxon>
        <taxon>Pseudomonadota</taxon>
        <taxon>Gammaproteobacteria</taxon>
        <taxon>Enterobacterales</taxon>
        <taxon>Enterobacteriaceae</taxon>
        <taxon>Salmonella</taxon>
    </lineage>
</organism>
<protein>
    <recommendedName>
        <fullName evidence="1">UDP-4-amino-4-deoxy-L-arabinose--oxoglutarate aminotransferase</fullName>
        <ecNumber evidence="1">2.6.1.87</ecNumber>
    </recommendedName>
    <alternativeName>
        <fullName evidence="1">UDP-(beta-L-threo-pentapyranosyl-4''-ulose diphosphate) aminotransferase</fullName>
        <shortName evidence="1">UDP-Ara4O aminotransferase</shortName>
    </alternativeName>
    <alternativeName>
        <fullName evidence="1">UDP-4-amino-4-deoxy-L-arabinose aminotransferase</fullName>
    </alternativeName>
</protein>
<feature type="chain" id="PRO_1000085383" description="UDP-4-amino-4-deoxy-L-arabinose--oxoglutarate aminotransferase">
    <location>
        <begin position="1"/>
        <end position="379"/>
    </location>
</feature>
<feature type="modified residue" description="N6-(pyridoxal phosphate)lysine" evidence="1">
    <location>
        <position position="182"/>
    </location>
</feature>
<proteinExistence type="inferred from homology"/>
<keyword id="KW-0032">Aminotransferase</keyword>
<keyword id="KW-0046">Antibiotic resistance</keyword>
<keyword id="KW-0441">Lipid A biosynthesis</keyword>
<keyword id="KW-0444">Lipid biosynthesis</keyword>
<keyword id="KW-0443">Lipid metabolism</keyword>
<keyword id="KW-0448">Lipopolysaccharide biosynthesis</keyword>
<keyword id="KW-0663">Pyridoxal phosphate</keyword>
<keyword id="KW-0808">Transferase</keyword>
<accession>A9N5B4</accession>
<dbReference type="EC" id="2.6.1.87" evidence="1"/>
<dbReference type="EMBL" id="CP000886">
    <property type="protein sequence ID" value="ABX66110.1"/>
    <property type="molecule type" value="Genomic_DNA"/>
</dbReference>
<dbReference type="RefSeq" id="WP_001279291.1">
    <property type="nucleotide sequence ID" value="NC_010102.1"/>
</dbReference>
<dbReference type="SMR" id="A9N5B4"/>
<dbReference type="KEGG" id="spq:SPAB_00684"/>
<dbReference type="PATRIC" id="fig|1016998.12.peg.644"/>
<dbReference type="HOGENOM" id="CLU_033332_0_3_6"/>
<dbReference type="UniPathway" id="UPA00030"/>
<dbReference type="UniPathway" id="UPA00032">
    <property type="reaction ID" value="UER00493"/>
</dbReference>
<dbReference type="Proteomes" id="UP000008556">
    <property type="component" value="Chromosome"/>
</dbReference>
<dbReference type="GO" id="GO:0016020">
    <property type="term" value="C:membrane"/>
    <property type="evidence" value="ECO:0007669"/>
    <property type="project" value="GOC"/>
</dbReference>
<dbReference type="GO" id="GO:0030170">
    <property type="term" value="F:pyridoxal phosphate binding"/>
    <property type="evidence" value="ECO:0007669"/>
    <property type="project" value="TreeGrafter"/>
</dbReference>
<dbReference type="GO" id="GO:0099620">
    <property type="term" value="F:UDP-4-amino-4-deoxy-L-arabinose aminotransferase"/>
    <property type="evidence" value="ECO:0007669"/>
    <property type="project" value="UniProtKB-EC"/>
</dbReference>
<dbReference type="GO" id="GO:0009245">
    <property type="term" value="P:lipid A biosynthetic process"/>
    <property type="evidence" value="ECO:0007669"/>
    <property type="project" value="UniProtKB-KW"/>
</dbReference>
<dbReference type="GO" id="GO:0009103">
    <property type="term" value="P:lipopolysaccharide biosynthetic process"/>
    <property type="evidence" value="ECO:0007669"/>
    <property type="project" value="UniProtKB-UniRule"/>
</dbReference>
<dbReference type="GO" id="GO:0046677">
    <property type="term" value="P:response to antibiotic"/>
    <property type="evidence" value="ECO:0007669"/>
    <property type="project" value="UniProtKB-KW"/>
</dbReference>
<dbReference type="CDD" id="cd00616">
    <property type="entry name" value="AHBA_syn"/>
    <property type="match status" value="1"/>
</dbReference>
<dbReference type="FunFam" id="3.40.640.10:FF:000040">
    <property type="entry name" value="UDP-4-amino-4-deoxy-L-arabinose--oxoglutarate aminotransferase"/>
    <property type="match status" value="1"/>
</dbReference>
<dbReference type="FunFam" id="3.90.1150.10:FF:000030">
    <property type="entry name" value="UDP-4-amino-4-deoxy-L-arabinose--oxoglutarate aminotransferase"/>
    <property type="match status" value="1"/>
</dbReference>
<dbReference type="Gene3D" id="3.90.1150.10">
    <property type="entry name" value="Aspartate Aminotransferase, domain 1"/>
    <property type="match status" value="1"/>
</dbReference>
<dbReference type="Gene3D" id="3.40.640.10">
    <property type="entry name" value="Type I PLP-dependent aspartate aminotransferase-like (Major domain)"/>
    <property type="match status" value="1"/>
</dbReference>
<dbReference type="HAMAP" id="MF_01167">
    <property type="entry name" value="ArnB_transfer"/>
    <property type="match status" value="1"/>
</dbReference>
<dbReference type="InterPro" id="IPR022850">
    <property type="entry name" value="ArnB_NH2Trfase"/>
</dbReference>
<dbReference type="InterPro" id="IPR000653">
    <property type="entry name" value="DegT/StrS_aminotransferase"/>
</dbReference>
<dbReference type="InterPro" id="IPR015424">
    <property type="entry name" value="PyrdxlP-dep_Trfase"/>
</dbReference>
<dbReference type="InterPro" id="IPR015421">
    <property type="entry name" value="PyrdxlP-dep_Trfase_major"/>
</dbReference>
<dbReference type="InterPro" id="IPR015422">
    <property type="entry name" value="PyrdxlP-dep_Trfase_small"/>
</dbReference>
<dbReference type="NCBIfam" id="NF008658">
    <property type="entry name" value="PRK11658.1"/>
    <property type="match status" value="1"/>
</dbReference>
<dbReference type="PANTHER" id="PTHR30244">
    <property type="entry name" value="TRANSAMINASE"/>
    <property type="match status" value="1"/>
</dbReference>
<dbReference type="PANTHER" id="PTHR30244:SF41">
    <property type="entry name" value="UDP-4-AMINO-4-DEOXY-L-ARABINOSE--OXOGLUTARATE AMINOTRANSFERASE"/>
    <property type="match status" value="1"/>
</dbReference>
<dbReference type="Pfam" id="PF01041">
    <property type="entry name" value="DegT_DnrJ_EryC1"/>
    <property type="match status" value="1"/>
</dbReference>
<dbReference type="PIRSF" id="PIRSF000390">
    <property type="entry name" value="PLP_StrS"/>
    <property type="match status" value="1"/>
</dbReference>
<dbReference type="SUPFAM" id="SSF53383">
    <property type="entry name" value="PLP-dependent transferases"/>
    <property type="match status" value="1"/>
</dbReference>
<evidence type="ECO:0000255" key="1">
    <source>
        <dbReference type="HAMAP-Rule" id="MF_01167"/>
    </source>
</evidence>
<comment type="function">
    <text evidence="1">Catalyzes the conversion of UDP-4-keto-arabinose (UDP-Ara4O) to UDP-4-amino-4-deoxy-L-arabinose (UDP-L-Ara4N). The modified arabinose is attached to lipid A and is required for resistance to polymyxin and cationic antimicrobial peptides.</text>
</comment>
<comment type="catalytic activity">
    <reaction evidence="1">
        <text>UDP-4-amino-4-deoxy-beta-L-arabinose + 2-oxoglutarate = UDP-beta-L-threo-pentopyranos-4-ulose + L-glutamate</text>
        <dbReference type="Rhea" id="RHEA:24710"/>
        <dbReference type="ChEBI" id="CHEBI:16810"/>
        <dbReference type="ChEBI" id="CHEBI:29985"/>
        <dbReference type="ChEBI" id="CHEBI:58708"/>
        <dbReference type="ChEBI" id="CHEBI:58710"/>
        <dbReference type="EC" id="2.6.1.87"/>
    </reaction>
</comment>
<comment type="cofactor">
    <cofactor evidence="1">
        <name>pyridoxal 5'-phosphate</name>
        <dbReference type="ChEBI" id="CHEBI:597326"/>
    </cofactor>
</comment>
<comment type="pathway">
    <text evidence="1">Nucleotide-sugar biosynthesis; UDP-4-deoxy-4-formamido-beta-L-arabinose biosynthesis; UDP-4-deoxy-4-formamido-beta-L-arabinose from UDP-alpha-D-glucuronate: step 2/3.</text>
</comment>
<comment type="pathway">
    <text evidence="1">Bacterial outer membrane biogenesis; lipopolysaccharide biosynthesis.</text>
</comment>
<comment type="subunit">
    <text evidence="1">Homodimer.</text>
</comment>
<comment type="similarity">
    <text evidence="1">Belongs to the DegT/DnrJ/EryC1 family. ArnB subfamily.</text>
</comment>